<organism>
    <name type="scientific">Rhizobium leguminosarum bv. trifolii (strain WSM2304)</name>
    <dbReference type="NCBI Taxonomy" id="395492"/>
    <lineage>
        <taxon>Bacteria</taxon>
        <taxon>Pseudomonadati</taxon>
        <taxon>Pseudomonadota</taxon>
        <taxon>Alphaproteobacteria</taxon>
        <taxon>Hyphomicrobiales</taxon>
        <taxon>Rhizobiaceae</taxon>
        <taxon>Rhizobium/Agrobacterium group</taxon>
        <taxon>Rhizobium</taxon>
    </lineage>
</organism>
<evidence type="ECO:0000255" key="1">
    <source>
        <dbReference type="HAMAP-Rule" id="MF_00822"/>
    </source>
</evidence>
<evidence type="ECO:0000256" key="2">
    <source>
        <dbReference type="SAM" id="MobiDB-lite"/>
    </source>
</evidence>
<name>UREE_RHILW</name>
<proteinExistence type="inferred from homology"/>
<keyword id="KW-0143">Chaperone</keyword>
<keyword id="KW-0963">Cytoplasm</keyword>
<keyword id="KW-0533">Nickel</keyword>
<keyword id="KW-1185">Reference proteome</keyword>
<dbReference type="EMBL" id="CP001191">
    <property type="protein sequence ID" value="ACI56315.1"/>
    <property type="molecule type" value="Genomic_DNA"/>
</dbReference>
<dbReference type="RefSeq" id="WP_012558723.1">
    <property type="nucleotide sequence ID" value="NC_011369.1"/>
</dbReference>
<dbReference type="SMR" id="B5ZMN7"/>
<dbReference type="STRING" id="395492.Rleg2_3048"/>
<dbReference type="KEGG" id="rlt:Rleg2_3048"/>
<dbReference type="eggNOG" id="COG2371">
    <property type="taxonomic scope" value="Bacteria"/>
</dbReference>
<dbReference type="HOGENOM" id="CLU_093757_1_0_5"/>
<dbReference type="Proteomes" id="UP000008330">
    <property type="component" value="Chromosome"/>
</dbReference>
<dbReference type="GO" id="GO:0005737">
    <property type="term" value="C:cytoplasm"/>
    <property type="evidence" value="ECO:0007669"/>
    <property type="project" value="UniProtKB-SubCell"/>
</dbReference>
<dbReference type="GO" id="GO:0016151">
    <property type="term" value="F:nickel cation binding"/>
    <property type="evidence" value="ECO:0007669"/>
    <property type="project" value="UniProtKB-UniRule"/>
</dbReference>
<dbReference type="GO" id="GO:0051082">
    <property type="term" value="F:unfolded protein binding"/>
    <property type="evidence" value="ECO:0007669"/>
    <property type="project" value="UniProtKB-UniRule"/>
</dbReference>
<dbReference type="GO" id="GO:0006457">
    <property type="term" value="P:protein folding"/>
    <property type="evidence" value="ECO:0007669"/>
    <property type="project" value="InterPro"/>
</dbReference>
<dbReference type="GO" id="GO:0065003">
    <property type="term" value="P:protein-containing complex assembly"/>
    <property type="evidence" value="ECO:0007669"/>
    <property type="project" value="InterPro"/>
</dbReference>
<dbReference type="GO" id="GO:0019627">
    <property type="term" value="P:urea metabolic process"/>
    <property type="evidence" value="ECO:0007669"/>
    <property type="project" value="InterPro"/>
</dbReference>
<dbReference type="CDD" id="cd00571">
    <property type="entry name" value="UreE"/>
    <property type="match status" value="1"/>
</dbReference>
<dbReference type="Gene3D" id="2.60.260.20">
    <property type="entry name" value="Urease metallochaperone UreE, N-terminal domain"/>
    <property type="match status" value="1"/>
</dbReference>
<dbReference type="Gene3D" id="3.30.70.790">
    <property type="entry name" value="UreE, C-terminal domain"/>
    <property type="match status" value="1"/>
</dbReference>
<dbReference type="HAMAP" id="MF_00822">
    <property type="entry name" value="UreE"/>
    <property type="match status" value="1"/>
</dbReference>
<dbReference type="InterPro" id="IPR012406">
    <property type="entry name" value="UreE"/>
</dbReference>
<dbReference type="InterPro" id="IPR007864">
    <property type="entry name" value="UreE_C_dom"/>
</dbReference>
<dbReference type="InterPro" id="IPR004029">
    <property type="entry name" value="UreE_N"/>
</dbReference>
<dbReference type="InterPro" id="IPR036118">
    <property type="entry name" value="UreE_N_sf"/>
</dbReference>
<dbReference type="NCBIfam" id="NF009760">
    <property type="entry name" value="PRK13261.2-6"/>
    <property type="match status" value="1"/>
</dbReference>
<dbReference type="Pfam" id="PF05194">
    <property type="entry name" value="UreE_C"/>
    <property type="match status" value="1"/>
</dbReference>
<dbReference type="Pfam" id="PF02814">
    <property type="entry name" value="UreE_N"/>
    <property type="match status" value="1"/>
</dbReference>
<dbReference type="PIRSF" id="PIRSF036402">
    <property type="entry name" value="Ureas_acces_UreE"/>
    <property type="match status" value="1"/>
</dbReference>
<dbReference type="SMART" id="SM00988">
    <property type="entry name" value="UreE_N"/>
    <property type="match status" value="1"/>
</dbReference>
<dbReference type="SUPFAM" id="SSF69737">
    <property type="entry name" value="Urease metallochaperone UreE, C-terminal domain"/>
    <property type="match status" value="1"/>
</dbReference>
<dbReference type="SUPFAM" id="SSF69287">
    <property type="entry name" value="Urease metallochaperone UreE, N-terminal domain"/>
    <property type="match status" value="1"/>
</dbReference>
<gene>
    <name evidence="1" type="primary">ureE</name>
    <name type="ordered locus">Rleg2_3048</name>
</gene>
<protein>
    <recommendedName>
        <fullName evidence="1">Urease accessory protein UreE</fullName>
    </recommendedName>
</protein>
<comment type="function">
    <text evidence="1">Involved in urease metallocenter assembly. Binds nickel. Probably functions as a nickel donor during metallocenter assembly.</text>
</comment>
<comment type="subcellular location">
    <subcellularLocation>
        <location evidence="1">Cytoplasm</location>
    </subcellularLocation>
</comment>
<comment type="similarity">
    <text evidence="1">Belongs to the UreE family.</text>
</comment>
<accession>B5ZMN7</accession>
<reference key="1">
    <citation type="journal article" date="2010" name="Stand. Genomic Sci.">
        <title>Complete genome sequence of Rhizobium leguminosarum bv trifolii strain WSM2304, an effective microsymbiont of the South American clover Trifolium polymorphum.</title>
        <authorList>
            <person name="Reeve W."/>
            <person name="O'Hara G."/>
            <person name="Chain P."/>
            <person name="Ardley J."/>
            <person name="Brau L."/>
            <person name="Nandesena K."/>
            <person name="Tiwari R."/>
            <person name="Malfatti S."/>
            <person name="Kiss H."/>
            <person name="Lapidus A."/>
            <person name="Copeland A."/>
            <person name="Nolan M."/>
            <person name="Land M."/>
            <person name="Ivanova N."/>
            <person name="Mavromatis K."/>
            <person name="Markowitz V."/>
            <person name="Kyrpides N."/>
            <person name="Melino V."/>
            <person name="Denton M."/>
            <person name="Yates R."/>
            <person name="Howieson J."/>
        </authorList>
    </citation>
    <scope>NUCLEOTIDE SEQUENCE [LARGE SCALE GENOMIC DNA]</scope>
    <source>
        <strain>WSM2304</strain>
    </source>
</reference>
<sequence length="193" mass="21903">MQRVTSYLPAGTPSSHPTAQVKLPHDLRHLRRKLLHLENGEMVMLDLKDPVLFANGDLLVRDDGELIEILAADEKLFEIRGRDRTHLVELAWHLGNRHLAAQIEEDRIVILRDHVIRSMLQGLGATVLDIDEPFQPARGAYHSHGAHSHDQGHAAHDHGNEHKHDHGHDHVHGPGCDHDHDHDHGHHHDHKHD</sequence>
<feature type="chain" id="PRO_1000213119" description="Urease accessory protein UreE">
    <location>
        <begin position="1"/>
        <end position="193"/>
    </location>
</feature>
<feature type="region of interest" description="Disordered" evidence="2">
    <location>
        <begin position="138"/>
        <end position="193"/>
    </location>
</feature>
<feature type="compositionally biased region" description="Basic and acidic residues" evidence="2">
    <location>
        <begin position="147"/>
        <end position="193"/>
    </location>
</feature>